<gene>
    <name evidence="1" type="primary">dnaJ</name>
    <name type="ordered locus">STH505</name>
</gene>
<name>DNAJ_SYMTH</name>
<protein>
    <recommendedName>
        <fullName evidence="1">Chaperone protein DnaJ</fullName>
    </recommendedName>
</protein>
<evidence type="ECO:0000255" key="1">
    <source>
        <dbReference type="HAMAP-Rule" id="MF_01152"/>
    </source>
</evidence>
<feature type="chain" id="PRO_0000070910" description="Chaperone protein DnaJ">
    <location>
        <begin position="1"/>
        <end position="386"/>
    </location>
</feature>
<feature type="domain" description="J" evidence="1">
    <location>
        <begin position="8"/>
        <end position="73"/>
    </location>
</feature>
<feature type="repeat" description="CXXCXGXG motif">
    <location>
        <begin position="152"/>
        <end position="159"/>
    </location>
</feature>
<feature type="repeat" description="CXXCXGXG motif">
    <location>
        <begin position="169"/>
        <end position="176"/>
    </location>
</feature>
<feature type="repeat" description="CXXCXGXG motif">
    <location>
        <begin position="195"/>
        <end position="202"/>
    </location>
</feature>
<feature type="repeat" description="CXXCXGXG motif">
    <location>
        <begin position="209"/>
        <end position="216"/>
    </location>
</feature>
<feature type="zinc finger region" description="CR-type" evidence="1">
    <location>
        <begin position="139"/>
        <end position="221"/>
    </location>
</feature>
<feature type="binding site" evidence="1">
    <location>
        <position position="152"/>
    </location>
    <ligand>
        <name>Zn(2+)</name>
        <dbReference type="ChEBI" id="CHEBI:29105"/>
        <label>1</label>
    </ligand>
</feature>
<feature type="binding site" evidence="1">
    <location>
        <position position="155"/>
    </location>
    <ligand>
        <name>Zn(2+)</name>
        <dbReference type="ChEBI" id="CHEBI:29105"/>
        <label>1</label>
    </ligand>
</feature>
<feature type="binding site" evidence="1">
    <location>
        <position position="169"/>
    </location>
    <ligand>
        <name>Zn(2+)</name>
        <dbReference type="ChEBI" id="CHEBI:29105"/>
        <label>2</label>
    </ligand>
</feature>
<feature type="binding site" evidence="1">
    <location>
        <position position="172"/>
    </location>
    <ligand>
        <name>Zn(2+)</name>
        <dbReference type="ChEBI" id="CHEBI:29105"/>
        <label>2</label>
    </ligand>
</feature>
<feature type="binding site" evidence="1">
    <location>
        <position position="195"/>
    </location>
    <ligand>
        <name>Zn(2+)</name>
        <dbReference type="ChEBI" id="CHEBI:29105"/>
        <label>2</label>
    </ligand>
</feature>
<feature type="binding site" evidence="1">
    <location>
        <position position="198"/>
    </location>
    <ligand>
        <name>Zn(2+)</name>
        <dbReference type="ChEBI" id="CHEBI:29105"/>
        <label>2</label>
    </ligand>
</feature>
<feature type="binding site" evidence="1">
    <location>
        <position position="209"/>
    </location>
    <ligand>
        <name>Zn(2+)</name>
        <dbReference type="ChEBI" id="CHEBI:29105"/>
        <label>1</label>
    </ligand>
</feature>
<feature type="binding site" evidence="1">
    <location>
        <position position="212"/>
    </location>
    <ligand>
        <name>Zn(2+)</name>
        <dbReference type="ChEBI" id="CHEBI:29105"/>
        <label>1</label>
    </ligand>
</feature>
<dbReference type="EMBL" id="AP006840">
    <property type="protein sequence ID" value="BAD39490.1"/>
    <property type="molecule type" value="Genomic_DNA"/>
</dbReference>
<dbReference type="SMR" id="Q67S53"/>
<dbReference type="STRING" id="292459.STH505"/>
<dbReference type="KEGG" id="sth:STH505"/>
<dbReference type="eggNOG" id="COG0484">
    <property type="taxonomic scope" value="Bacteria"/>
</dbReference>
<dbReference type="HOGENOM" id="CLU_017633_0_7_9"/>
<dbReference type="Proteomes" id="UP000000417">
    <property type="component" value="Chromosome"/>
</dbReference>
<dbReference type="GO" id="GO:0005737">
    <property type="term" value="C:cytoplasm"/>
    <property type="evidence" value="ECO:0007669"/>
    <property type="project" value="UniProtKB-SubCell"/>
</dbReference>
<dbReference type="GO" id="GO:0005524">
    <property type="term" value="F:ATP binding"/>
    <property type="evidence" value="ECO:0007669"/>
    <property type="project" value="InterPro"/>
</dbReference>
<dbReference type="GO" id="GO:0031072">
    <property type="term" value="F:heat shock protein binding"/>
    <property type="evidence" value="ECO:0007669"/>
    <property type="project" value="InterPro"/>
</dbReference>
<dbReference type="GO" id="GO:0051082">
    <property type="term" value="F:unfolded protein binding"/>
    <property type="evidence" value="ECO:0007669"/>
    <property type="project" value="UniProtKB-UniRule"/>
</dbReference>
<dbReference type="GO" id="GO:0008270">
    <property type="term" value="F:zinc ion binding"/>
    <property type="evidence" value="ECO:0007669"/>
    <property type="project" value="UniProtKB-UniRule"/>
</dbReference>
<dbReference type="GO" id="GO:0051085">
    <property type="term" value="P:chaperone cofactor-dependent protein refolding"/>
    <property type="evidence" value="ECO:0007669"/>
    <property type="project" value="TreeGrafter"/>
</dbReference>
<dbReference type="GO" id="GO:0006260">
    <property type="term" value="P:DNA replication"/>
    <property type="evidence" value="ECO:0007669"/>
    <property type="project" value="UniProtKB-KW"/>
</dbReference>
<dbReference type="GO" id="GO:0042026">
    <property type="term" value="P:protein refolding"/>
    <property type="evidence" value="ECO:0007669"/>
    <property type="project" value="TreeGrafter"/>
</dbReference>
<dbReference type="GO" id="GO:0009408">
    <property type="term" value="P:response to heat"/>
    <property type="evidence" value="ECO:0007669"/>
    <property type="project" value="InterPro"/>
</dbReference>
<dbReference type="CDD" id="cd06257">
    <property type="entry name" value="DnaJ"/>
    <property type="match status" value="1"/>
</dbReference>
<dbReference type="CDD" id="cd10747">
    <property type="entry name" value="DnaJ_C"/>
    <property type="match status" value="1"/>
</dbReference>
<dbReference type="CDD" id="cd10719">
    <property type="entry name" value="DnaJ_zf"/>
    <property type="match status" value="1"/>
</dbReference>
<dbReference type="FunFam" id="2.60.260.20:FF:000005">
    <property type="entry name" value="Chaperone protein dnaJ 1, mitochondrial"/>
    <property type="match status" value="1"/>
</dbReference>
<dbReference type="FunFam" id="1.10.287.110:FF:000031">
    <property type="entry name" value="Molecular chaperone DnaJ"/>
    <property type="match status" value="1"/>
</dbReference>
<dbReference type="FunFam" id="2.10.230.10:FF:000002">
    <property type="entry name" value="Molecular chaperone DnaJ"/>
    <property type="match status" value="1"/>
</dbReference>
<dbReference type="Gene3D" id="1.10.287.110">
    <property type="entry name" value="DnaJ domain"/>
    <property type="match status" value="1"/>
</dbReference>
<dbReference type="Gene3D" id="2.10.230.10">
    <property type="entry name" value="Heat shock protein DnaJ, cysteine-rich domain"/>
    <property type="match status" value="1"/>
</dbReference>
<dbReference type="Gene3D" id="2.60.260.20">
    <property type="entry name" value="Urease metallochaperone UreE, N-terminal domain"/>
    <property type="match status" value="2"/>
</dbReference>
<dbReference type="HAMAP" id="MF_01152">
    <property type="entry name" value="DnaJ"/>
    <property type="match status" value="1"/>
</dbReference>
<dbReference type="InterPro" id="IPR012724">
    <property type="entry name" value="DnaJ"/>
</dbReference>
<dbReference type="InterPro" id="IPR002939">
    <property type="entry name" value="DnaJ_C"/>
</dbReference>
<dbReference type="InterPro" id="IPR001623">
    <property type="entry name" value="DnaJ_domain"/>
</dbReference>
<dbReference type="InterPro" id="IPR018253">
    <property type="entry name" value="DnaJ_domain_CS"/>
</dbReference>
<dbReference type="InterPro" id="IPR008971">
    <property type="entry name" value="HSP40/DnaJ_pept-bd"/>
</dbReference>
<dbReference type="InterPro" id="IPR001305">
    <property type="entry name" value="HSP_DnaJ_Cys-rich_dom"/>
</dbReference>
<dbReference type="InterPro" id="IPR036410">
    <property type="entry name" value="HSP_DnaJ_Cys-rich_dom_sf"/>
</dbReference>
<dbReference type="InterPro" id="IPR036869">
    <property type="entry name" value="J_dom_sf"/>
</dbReference>
<dbReference type="NCBIfam" id="TIGR02349">
    <property type="entry name" value="DnaJ_bact"/>
    <property type="match status" value="1"/>
</dbReference>
<dbReference type="NCBIfam" id="NF008035">
    <property type="entry name" value="PRK10767.1"/>
    <property type="match status" value="1"/>
</dbReference>
<dbReference type="PANTHER" id="PTHR43096:SF48">
    <property type="entry name" value="CHAPERONE PROTEIN DNAJ"/>
    <property type="match status" value="1"/>
</dbReference>
<dbReference type="PANTHER" id="PTHR43096">
    <property type="entry name" value="DNAJ HOMOLOG 1, MITOCHONDRIAL-RELATED"/>
    <property type="match status" value="1"/>
</dbReference>
<dbReference type="Pfam" id="PF00226">
    <property type="entry name" value="DnaJ"/>
    <property type="match status" value="1"/>
</dbReference>
<dbReference type="Pfam" id="PF01556">
    <property type="entry name" value="DnaJ_C"/>
    <property type="match status" value="1"/>
</dbReference>
<dbReference type="Pfam" id="PF00684">
    <property type="entry name" value="DnaJ_CXXCXGXG"/>
    <property type="match status" value="1"/>
</dbReference>
<dbReference type="PRINTS" id="PR00625">
    <property type="entry name" value="JDOMAIN"/>
</dbReference>
<dbReference type="SMART" id="SM00271">
    <property type="entry name" value="DnaJ"/>
    <property type="match status" value="1"/>
</dbReference>
<dbReference type="SUPFAM" id="SSF46565">
    <property type="entry name" value="Chaperone J-domain"/>
    <property type="match status" value="1"/>
</dbReference>
<dbReference type="SUPFAM" id="SSF57938">
    <property type="entry name" value="DnaJ/Hsp40 cysteine-rich domain"/>
    <property type="match status" value="1"/>
</dbReference>
<dbReference type="SUPFAM" id="SSF49493">
    <property type="entry name" value="HSP40/DnaJ peptide-binding domain"/>
    <property type="match status" value="2"/>
</dbReference>
<dbReference type="PROSITE" id="PS00636">
    <property type="entry name" value="DNAJ_1"/>
    <property type="match status" value="1"/>
</dbReference>
<dbReference type="PROSITE" id="PS50076">
    <property type="entry name" value="DNAJ_2"/>
    <property type="match status" value="1"/>
</dbReference>
<dbReference type="PROSITE" id="PS51188">
    <property type="entry name" value="ZF_CR"/>
    <property type="match status" value="1"/>
</dbReference>
<sequence>MDRLAKRDYYEILGVPRNATEAEIKKAFRNLARKYHPDANKDDPDAAEKFKEINEAYQVLSDPEKRARYDQFGHAAEQMGGAGGNPFEGFGGFGDFGGFSDIFEMFFGGAGRQRNPRGPVRGADLEYELELTLKEAAFGCTKELRVPRVEDCDTCHGSGARPGTQPVTCPKCGGTGQVQMTQHTVFGRFVNVMTCDRCRGEGKIVESPCPTCRGRGRVQKTQRVEVKVPGGVETGTRLRMPGYGEAGERGGPPGDLFIVMRVRPDRRFRREGDDLFTTTEISFIQAALGTEIEVETLDGPELIKIPEGTQPGDTIRLKGKGTHRLRGSGRGDLHVVISVKTPGRLSERERELLLEVAALRGERVAGMTENKEKSFLKKMKDALGGR</sequence>
<proteinExistence type="inferred from homology"/>
<organism>
    <name type="scientific">Symbiobacterium thermophilum (strain DSM 24528 / JCM 14929 / IAM 14863 / T)</name>
    <dbReference type="NCBI Taxonomy" id="292459"/>
    <lineage>
        <taxon>Bacteria</taxon>
        <taxon>Bacillati</taxon>
        <taxon>Bacillota</taxon>
        <taxon>Clostridia</taxon>
        <taxon>Eubacteriales</taxon>
        <taxon>Symbiobacteriaceae</taxon>
        <taxon>Symbiobacterium</taxon>
    </lineage>
</organism>
<comment type="function">
    <text evidence="1">Participates actively in the response to hyperosmotic and heat shock by preventing the aggregation of stress-denatured proteins and by disaggregating proteins, also in an autonomous, DnaK-independent fashion. Unfolded proteins bind initially to DnaJ; upon interaction with the DnaJ-bound protein, DnaK hydrolyzes its bound ATP, resulting in the formation of a stable complex. GrpE releases ADP from DnaK; ATP binding to DnaK triggers the release of the substrate protein, thus completing the reaction cycle. Several rounds of ATP-dependent interactions between DnaJ, DnaK and GrpE are required for fully efficient folding. Also involved, together with DnaK and GrpE, in the DNA replication of plasmids through activation of initiation proteins.</text>
</comment>
<comment type="cofactor">
    <cofactor evidence="1">
        <name>Zn(2+)</name>
        <dbReference type="ChEBI" id="CHEBI:29105"/>
    </cofactor>
    <text evidence="1">Binds 2 Zn(2+) ions per monomer.</text>
</comment>
<comment type="subunit">
    <text evidence="1">Homodimer.</text>
</comment>
<comment type="subcellular location">
    <subcellularLocation>
        <location evidence="1">Cytoplasm</location>
    </subcellularLocation>
</comment>
<comment type="domain">
    <text evidence="1">The J domain is necessary and sufficient to stimulate DnaK ATPase activity. Zinc center 1 plays an important role in the autonomous, DnaK-independent chaperone activity of DnaJ. Zinc center 2 is essential for interaction with DnaK and for DnaJ activity.</text>
</comment>
<comment type="similarity">
    <text evidence="1">Belongs to the DnaJ family.</text>
</comment>
<accession>Q67S53</accession>
<reference key="1">
    <citation type="journal article" date="2004" name="Nucleic Acids Res.">
        <title>Genome sequence of Symbiobacterium thermophilum, an uncultivable bacterium that depends on microbial commensalism.</title>
        <authorList>
            <person name="Ueda K."/>
            <person name="Yamashita A."/>
            <person name="Ishikawa J."/>
            <person name="Shimada M."/>
            <person name="Watsuji T."/>
            <person name="Morimura K."/>
            <person name="Ikeda H."/>
            <person name="Hattori M."/>
            <person name="Beppu T."/>
        </authorList>
    </citation>
    <scope>NUCLEOTIDE SEQUENCE [LARGE SCALE GENOMIC DNA]</scope>
    <source>
        <strain>DSM 24528 / JCM 14929 / IAM 14863 / T</strain>
    </source>
</reference>
<keyword id="KW-0143">Chaperone</keyword>
<keyword id="KW-0963">Cytoplasm</keyword>
<keyword id="KW-0235">DNA replication</keyword>
<keyword id="KW-0479">Metal-binding</keyword>
<keyword id="KW-1185">Reference proteome</keyword>
<keyword id="KW-0677">Repeat</keyword>
<keyword id="KW-0346">Stress response</keyword>
<keyword id="KW-0862">Zinc</keyword>
<keyword id="KW-0863">Zinc-finger</keyword>